<dbReference type="EC" id="2.7.7.18" evidence="1"/>
<dbReference type="EMBL" id="CP000447">
    <property type="protein sequence ID" value="ABI70560.1"/>
    <property type="molecule type" value="Genomic_DNA"/>
</dbReference>
<dbReference type="RefSeq" id="WP_011636185.1">
    <property type="nucleotide sequence ID" value="NC_008345.1"/>
</dbReference>
<dbReference type="SMR" id="Q087K5"/>
<dbReference type="STRING" id="318167.Sfri_0702"/>
<dbReference type="KEGG" id="sfr:Sfri_0702"/>
<dbReference type="eggNOG" id="COG1057">
    <property type="taxonomic scope" value="Bacteria"/>
</dbReference>
<dbReference type="HOGENOM" id="CLU_069765_0_0_6"/>
<dbReference type="OrthoDB" id="5295945at2"/>
<dbReference type="UniPathway" id="UPA00253">
    <property type="reaction ID" value="UER00332"/>
</dbReference>
<dbReference type="Proteomes" id="UP000000684">
    <property type="component" value="Chromosome"/>
</dbReference>
<dbReference type="GO" id="GO:0005524">
    <property type="term" value="F:ATP binding"/>
    <property type="evidence" value="ECO:0007669"/>
    <property type="project" value="UniProtKB-KW"/>
</dbReference>
<dbReference type="GO" id="GO:0004515">
    <property type="term" value="F:nicotinate-nucleotide adenylyltransferase activity"/>
    <property type="evidence" value="ECO:0007669"/>
    <property type="project" value="UniProtKB-UniRule"/>
</dbReference>
<dbReference type="GO" id="GO:0009435">
    <property type="term" value="P:NAD biosynthetic process"/>
    <property type="evidence" value="ECO:0007669"/>
    <property type="project" value="UniProtKB-UniRule"/>
</dbReference>
<dbReference type="CDD" id="cd02165">
    <property type="entry name" value="NMNAT"/>
    <property type="match status" value="1"/>
</dbReference>
<dbReference type="Gene3D" id="3.40.50.620">
    <property type="entry name" value="HUPs"/>
    <property type="match status" value="1"/>
</dbReference>
<dbReference type="HAMAP" id="MF_00244">
    <property type="entry name" value="NaMN_adenylyltr"/>
    <property type="match status" value="1"/>
</dbReference>
<dbReference type="InterPro" id="IPR004821">
    <property type="entry name" value="Cyt_trans-like"/>
</dbReference>
<dbReference type="InterPro" id="IPR005248">
    <property type="entry name" value="NadD/NMNAT"/>
</dbReference>
<dbReference type="InterPro" id="IPR014729">
    <property type="entry name" value="Rossmann-like_a/b/a_fold"/>
</dbReference>
<dbReference type="NCBIfam" id="TIGR00125">
    <property type="entry name" value="cyt_tran_rel"/>
    <property type="match status" value="1"/>
</dbReference>
<dbReference type="NCBIfam" id="TIGR00482">
    <property type="entry name" value="nicotinate (nicotinamide) nucleotide adenylyltransferase"/>
    <property type="match status" value="1"/>
</dbReference>
<dbReference type="NCBIfam" id="NF000839">
    <property type="entry name" value="PRK00071.1-1"/>
    <property type="match status" value="1"/>
</dbReference>
<dbReference type="NCBIfam" id="NF000840">
    <property type="entry name" value="PRK00071.1-3"/>
    <property type="match status" value="1"/>
</dbReference>
<dbReference type="PANTHER" id="PTHR39321">
    <property type="entry name" value="NICOTINATE-NUCLEOTIDE ADENYLYLTRANSFERASE-RELATED"/>
    <property type="match status" value="1"/>
</dbReference>
<dbReference type="PANTHER" id="PTHR39321:SF3">
    <property type="entry name" value="PHOSPHOPANTETHEINE ADENYLYLTRANSFERASE"/>
    <property type="match status" value="1"/>
</dbReference>
<dbReference type="Pfam" id="PF01467">
    <property type="entry name" value="CTP_transf_like"/>
    <property type="match status" value="1"/>
</dbReference>
<dbReference type="SUPFAM" id="SSF52374">
    <property type="entry name" value="Nucleotidylyl transferase"/>
    <property type="match status" value="1"/>
</dbReference>
<proteinExistence type="inferred from homology"/>
<accession>Q087K5</accession>
<name>NADD_SHEFN</name>
<feature type="chain" id="PRO_0000310140" description="Probable nicotinate-nucleotide adenylyltransferase">
    <location>
        <begin position="1"/>
        <end position="211"/>
    </location>
</feature>
<evidence type="ECO:0000255" key="1">
    <source>
        <dbReference type="HAMAP-Rule" id="MF_00244"/>
    </source>
</evidence>
<reference key="1">
    <citation type="submission" date="2006-08" db="EMBL/GenBank/DDBJ databases">
        <title>Complete sequence of Shewanella frigidimarina NCIMB 400.</title>
        <authorList>
            <consortium name="US DOE Joint Genome Institute"/>
            <person name="Copeland A."/>
            <person name="Lucas S."/>
            <person name="Lapidus A."/>
            <person name="Barry K."/>
            <person name="Detter J.C."/>
            <person name="Glavina del Rio T."/>
            <person name="Hammon N."/>
            <person name="Israni S."/>
            <person name="Dalin E."/>
            <person name="Tice H."/>
            <person name="Pitluck S."/>
            <person name="Fredrickson J.K."/>
            <person name="Kolker E."/>
            <person name="McCuel L.A."/>
            <person name="DiChristina T."/>
            <person name="Nealson K.H."/>
            <person name="Newman D."/>
            <person name="Tiedje J.M."/>
            <person name="Zhou J."/>
            <person name="Romine M.F."/>
            <person name="Culley D.E."/>
            <person name="Serres M."/>
            <person name="Chertkov O."/>
            <person name="Brettin T."/>
            <person name="Bruce D."/>
            <person name="Han C."/>
            <person name="Tapia R."/>
            <person name="Gilna P."/>
            <person name="Schmutz J."/>
            <person name="Larimer F."/>
            <person name="Land M."/>
            <person name="Hauser L."/>
            <person name="Kyrpides N."/>
            <person name="Mikhailova N."/>
            <person name="Richardson P."/>
        </authorList>
    </citation>
    <scope>NUCLEOTIDE SEQUENCE [LARGE SCALE GENOMIC DNA]</scope>
    <source>
        <strain>NCIMB 400</strain>
    </source>
</reference>
<comment type="function">
    <text evidence="1">Catalyzes the reversible adenylation of nicotinate mononucleotide (NaMN) to nicotinic acid adenine dinucleotide (NaAD).</text>
</comment>
<comment type="catalytic activity">
    <reaction evidence="1">
        <text>nicotinate beta-D-ribonucleotide + ATP + H(+) = deamido-NAD(+) + diphosphate</text>
        <dbReference type="Rhea" id="RHEA:22860"/>
        <dbReference type="ChEBI" id="CHEBI:15378"/>
        <dbReference type="ChEBI" id="CHEBI:30616"/>
        <dbReference type="ChEBI" id="CHEBI:33019"/>
        <dbReference type="ChEBI" id="CHEBI:57502"/>
        <dbReference type="ChEBI" id="CHEBI:58437"/>
        <dbReference type="EC" id="2.7.7.18"/>
    </reaction>
</comment>
<comment type="pathway">
    <text evidence="1">Cofactor biosynthesis; NAD(+) biosynthesis; deamido-NAD(+) from nicotinate D-ribonucleotide: step 1/1.</text>
</comment>
<comment type="similarity">
    <text evidence="1">Belongs to the NadD family.</text>
</comment>
<organism>
    <name type="scientific">Shewanella frigidimarina (strain NCIMB 400)</name>
    <dbReference type="NCBI Taxonomy" id="318167"/>
    <lineage>
        <taxon>Bacteria</taxon>
        <taxon>Pseudomonadati</taxon>
        <taxon>Pseudomonadota</taxon>
        <taxon>Gammaproteobacteria</taxon>
        <taxon>Alteromonadales</taxon>
        <taxon>Shewanellaceae</taxon>
        <taxon>Shewanella</taxon>
    </lineage>
</organism>
<gene>
    <name evidence="1" type="primary">nadD</name>
    <name type="ordered locus">Sfri_0702</name>
</gene>
<sequence length="211" mass="24546">MRIGILGGTFDPIHLGHINPALDVKQQLHLDQIWLMPNHIPPHKNTTVVSTHHRLEMVKLVCQQYPEFKLCDIEINRDTPSYSVTTLTLLTQQYPDDEFFFIMGMDSFVQLPLWYQWQSLFNLCHIALCQRPGWAMDTNSEMTKELLFRQATADYLDSPSHAKNGRIFTINSQLVDISSTEIRQQLAQNIDISTVLSQTTTEYIRQHQLYR</sequence>
<protein>
    <recommendedName>
        <fullName evidence="1">Probable nicotinate-nucleotide adenylyltransferase</fullName>
        <ecNumber evidence="1">2.7.7.18</ecNumber>
    </recommendedName>
    <alternativeName>
        <fullName evidence="1">Deamido-NAD(+) diphosphorylase</fullName>
    </alternativeName>
    <alternativeName>
        <fullName evidence="1">Deamido-NAD(+) pyrophosphorylase</fullName>
    </alternativeName>
    <alternativeName>
        <fullName evidence="1">Nicotinate mononucleotide adenylyltransferase</fullName>
        <shortName evidence="1">NaMN adenylyltransferase</shortName>
    </alternativeName>
</protein>
<keyword id="KW-0067">ATP-binding</keyword>
<keyword id="KW-0520">NAD</keyword>
<keyword id="KW-0547">Nucleotide-binding</keyword>
<keyword id="KW-0548">Nucleotidyltransferase</keyword>
<keyword id="KW-0662">Pyridine nucleotide biosynthesis</keyword>
<keyword id="KW-1185">Reference proteome</keyword>
<keyword id="KW-0808">Transferase</keyword>